<proteinExistence type="inferred from homology"/>
<protein>
    <recommendedName>
        <fullName>Uncharacterized protein 155L</fullName>
    </recommendedName>
</protein>
<dbReference type="EMBL" id="AF303741">
    <property type="protein sequence ID" value="AAB94465.1"/>
    <property type="molecule type" value="Genomic_DNA"/>
</dbReference>
<dbReference type="PIR" id="T03091">
    <property type="entry name" value="T03091"/>
</dbReference>
<dbReference type="RefSeq" id="NP_149618.1">
    <property type="nucleotide sequence ID" value="NC_003038.1"/>
</dbReference>
<dbReference type="SMR" id="O55754"/>
<dbReference type="KEGG" id="vg:1733218"/>
<dbReference type="Proteomes" id="UP000001359">
    <property type="component" value="Genome"/>
</dbReference>
<dbReference type="Gene3D" id="1.10.357.40">
    <property type="entry name" value="YbiA-like"/>
    <property type="match status" value="1"/>
</dbReference>
<dbReference type="InterPro" id="IPR037238">
    <property type="entry name" value="YbiA-like_sf"/>
</dbReference>
<dbReference type="SUPFAM" id="SSF143990">
    <property type="entry name" value="YbiA-like"/>
    <property type="match status" value="1"/>
</dbReference>
<organismHost>
    <name type="scientific">Acheta domesticus</name>
    <name type="common">House cricket</name>
    <dbReference type="NCBI Taxonomy" id="6997"/>
</organismHost>
<organismHost>
    <name type="scientific">Chilo suppressalis</name>
    <name type="common">Asiatic rice borer moth</name>
    <dbReference type="NCBI Taxonomy" id="168631"/>
</organismHost>
<organismHost>
    <name type="scientific">Gryllus bimaculatus</name>
    <name type="common">Two-spotted cricket</name>
    <dbReference type="NCBI Taxonomy" id="6999"/>
</organismHost>
<organismHost>
    <name type="scientific">Gryllus campestris</name>
    <dbReference type="NCBI Taxonomy" id="58607"/>
</organismHost>
<organismHost>
    <name type="scientific">Spodoptera frugiperda</name>
    <name type="common">Fall armyworm</name>
    <dbReference type="NCBI Taxonomy" id="7108"/>
</organismHost>
<sequence length="255" mass="29826">MKRNFRPKLKKQVDNTKKDTIVLKHEEDKPFGPLRNDYKSDLYIDGKRWNSVDNYVFSNLLPSIDFRKQTIEHLNPHQVEKTYYDVKFEINKSTLSSAIKIGIESKLIADPQFRQALLNTAGSSIMYLSKNNYLGYGNGKWFVNTYGIWLEHFRTGMLWSIARTDKHPTLKDDQIYDSYLAEKGLKLALHYENLDKYLKIDADLQGNGMVEIIKALIKKSGREKIFVLDRETALALQRKRYIEPIVKATQLIRYI</sequence>
<gene>
    <name type="ORF">IIV6-155L</name>
</gene>
<evidence type="ECO:0000305" key="1"/>
<organism>
    <name type="scientific">Invertebrate iridescent virus 6</name>
    <name type="common">IIV-6</name>
    <name type="synonym">Chilo iridescent virus</name>
    <dbReference type="NCBI Taxonomy" id="176652"/>
    <lineage>
        <taxon>Viruses</taxon>
        <taxon>Varidnaviria</taxon>
        <taxon>Bamfordvirae</taxon>
        <taxon>Nucleocytoviricota</taxon>
        <taxon>Megaviricetes</taxon>
        <taxon>Pimascovirales</taxon>
        <taxon>Iridoviridae</taxon>
        <taxon>Betairidovirinae</taxon>
        <taxon>Iridovirus</taxon>
    </lineage>
</organism>
<keyword id="KW-1185">Reference proteome</keyword>
<reference key="1">
    <citation type="journal article" date="2001" name="Virology">
        <title>Analysis of the first complete DNA sequence of an invertebrate iridovirus: coding strategy of the genome of Chilo iridescent virus.</title>
        <authorList>
            <person name="Jakob N.J."/>
            <person name="Mueller K."/>
            <person name="Bahr U."/>
            <person name="Darai G."/>
        </authorList>
    </citation>
    <scope>NUCLEOTIDE SEQUENCE [LARGE SCALE GENOMIC DNA]</scope>
</reference>
<reference key="2">
    <citation type="journal article" date="2007" name="Virol. J.">
        <title>Comparative genomic analysis of the family Iridoviridae: re-annotating and defining the core set of iridovirus genes.</title>
        <authorList>
            <person name="Eaton H.E."/>
            <person name="Metcalf J."/>
            <person name="Penny E."/>
            <person name="Tcherepanov V."/>
            <person name="Upton C."/>
            <person name="Brunetti C.R."/>
        </authorList>
    </citation>
    <scope>GENOME REANNOTATION</scope>
</reference>
<name>VF155_IIV6</name>
<accession>O55754</accession>
<comment type="similarity">
    <text evidence="1">Belongs to the IIV-6 155L family.</text>
</comment>
<feature type="chain" id="PRO_0000378013" description="Uncharacterized protein 155L">
    <location>
        <begin position="1"/>
        <end position="255"/>
    </location>
</feature>